<dbReference type="EMBL" id="AJ248288">
    <property type="protein sequence ID" value="CAB50514.1"/>
    <property type="molecule type" value="Genomic_DNA"/>
</dbReference>
<dbReference type="EMBL" id="HE613800">
    <property type="protein sequence ID" value="CCE71071.1"/>
    <property type="molecule type" value="Genomic_DNA"/>
</dbReference>
<dbReference type="PIR" id="D75009">
    <property type="entry name" value="D75009"/>
</dbReference>
<dbReference type="RefSeq" id="WP_010868728.1">
    <property type="nucleotide sequence ID" value="NC_000868.1"/>
</dbReference>
<dbReference type="SMR" id="Q9UY98"/>
<dbReference type="STRING" id="272844.PAB1291"/>
<dbReference type="KEGG" id="pab:PAB1291"/>
<dbReference type="PATRIC" id="fig|272844.11.peg.1720"/>
<dbReference type="eggNOG" id="arCOG01921">
    <property type="taxonomic scope" value="Archaea"/>
</dbReference>
<dbReference type="HOGENOM" id="CLU_146474_0_0_2"/>
<dbReference type="OrthoDB" id="18795at2157"/>
<dbReference type="PhylomeDB" id="Q9UY98"/>
<dbReference type="Proteomes" id="UP000000810">
    <property type="component" value="Chromosome"/>
</dbReference>
<dbReference type="Proteomes" id="UP000009139">
    <property type="component" value="Chromosome"/>
</dbReference>
<dbReference type="HAMAP" id="MF_00585">
    <property type="entry name" value="UPF0216"/>
    <property type="match status" value="1"/>
</dbReference>
<dbReference type="InterPro" id="IPR002746">
    <property type="entry name" value="UPF0216"/>
</dbReference>
<dbReference type="NCBIfam" id="NF003153">
    <property type="entry name" value="PRK04115.1"/>
    <property type="match status" value="1"/>
</dbReference>
<dbReference type="Pfam" id="PF01886">
    <property type="entry name" value="DUF61"/>
    <property type="match status" value="1"/>
</dbReference>
<dbReference type="PIRSF" id="PIRSF005264">
    <property type="entry name" value="UCP005264"/>
    <property type="match status" value="1"/>
</dbReference>
<evidence type="ECO:0000255" key="1">
    <source>
        <dbReference type="HAMAP-Rule" id="MF_00585"/>
    </source>
</evidence>
<protein>
    <recommendedName>
        <fullName evidence="1">UPF0216 protein PYRAB16100</fullName>
    </recommendedName>
</protein>
<organism>
    <name type="scientific">Pyrococcus abyssi (strain GE5 / Orsay)</name>
    <dbReference type="NCBI Taxonomy" id="272844"/>
    <lineage>
        <taxon>Archaea</taxon>
        <taxon>Methanobacteriati</taxon>
        <taxon>Methanobacteriota</taxon>
        <taxon>Thermococci</taxon>
        <taxon>Thermococcales</taxon>
        <taxon>Thermococcaceae</taxon>
        <taxon>Pyrococcus</taxon>
    </lineage>
</organism>
<proteinExistence type="inferred from homology"/>
<comment type="similarity">
    <text evidence="1">Belongs to the UPF0216 family.</text>
</comment>
<reference key="1">
    <citation type="journal article" date="2003" name="Mol. Microbiol.">
        <title>An integrated analysis of the genome of the hyperthermophilic archaeon Pyrococcus abyssi.</title>
        <authorList>
            <person name="Cohen G.N."/>
            <person name="Barbe V."/>
            <person name="Flament D."/>
            <person name="Galperin M."/>
            <person name="Heilig R."/>
            <person name="Lecompte O."/>
            <person name="Poch O."/>
            <person name="Prieur D."/>
            <person name="Querellou J."/>
            <person name="Ripp R."/>
            <person name="Thierry J.-C."/>
            <person name="Van der Oost J."/>
            <person name="Weissenbach J."/>
            <person name="Zivanovic Y."/>
            <person name="Forterre P."/>
        </authorList>
    </citation>
    <scope>NUCLEOTIDE SEQUENCE [LARGE SCALE GENOMIC DNA]</scope>
    <source>
        <strain>GE5 / Orsay</strain>
    </source>
</reference>
<reference key="2">
    <citation type="journal article" date="2012" name="Curr. Microbiol.">
        <title>Re-annotation of two hyperthermophilic archaea Pyrococcus abyssi GE5 and Pyrococcus furiosus DSM 3638.</title>
        <authorList>
            <person name="Gao J."/>
            <person name="Wang J."/>
        </authorList>
    </citation>
    <scope>GENOME REANNOTATION</scope>
    <source>
        <strain>GE5 / Orsay</strain>
    </source>
</reference>
<gene>
    <name type="ordered locus">PYRAB16100</name>
    <name type="ORF">PAB1291</name>
</gene>
<sequence>MERVERIIEFEIARINSHLPRARKSLKDLLNMEEPMITLRDGSVHYFKRQELELLASLLDEEEIAMLRLPMVLEISTVERDKIIIRGKVEAKVIRKILGFEEAIIEEPILKLPRYYLPKIRRILPTTTVHAFIVEW</sequence>
<accession>Q9UY98</accession>
<accession>G8ZJW4</accession>
<name>Y1610_PYRAB</name>
<feature type="chain" id="PRO_0000144227" description="UPF0216 protein PYRAB16100">
    <location>
        <begin position="1"/>
        <end position="136"/>
    </location>
</feature>